<comment type="function">
    <text evidence="2">CRISPR (clustered regularly interspaced short palindromic repeat) is an adaptive immune system that provides protection against mobile genetic elements (viruses, transposable elements and conjugative plasmids). CRISPR clusters contain sequences complementary to antecedent mobile elements and target invading nucleic acids. CRISPR clusters are transcribed and processed into CRISPR RNA (crRNA) (By similarity). A ssDNA exonuclease with 5' to 3' and perhaps 3' to 5' activity.</text>
</comment>
<comment type="cofactor">
    <cofactor evidence="2">
        <name>[4Fe-4S] cluster</name>
        <dbReference type="ChEBI" id="CHEBI:49883"/>
    </cofactor>
    <text evidence="2">Binds 1 [4Fe-4S] cluster per subunit. May not be required for nuclease activity.</text>
</comment>
<comment type="cofactor">
    <cofactor evidence="2">
        <name>Mn(2+)</name>
        <dbReference type="ChEBI" id="CHEBI:29035"/>
    </cofactor>
    <text evidence="2">Mn(2+) required for nuclease activity.</text>
</comment>
<comment type="subunit">
    <text evidence="3">Can form a Cascis complex with Cas4 and Csa1.</text>
</comment>
<comment type="induction">
    <text evidence="3">Slightly induced by 20 J/m2 ultraviolet light. Member of the csa1-cas1/2-cas4 operon.</text>
</comment>
<comment type="similarity">
    <text evidence="4">Belongs to the CRISPR-associated protein Csa1 family.</text>
</comment>
<accession>G4RJY8</accession>
<evidence type="ECO:0000250" key="1">
    <source>
        <dbReference type="UniProtKB" id="Q97TX9"/>
    </source>
</evidence>
<evidence type="ECO:0000250" key="2">
    <source>
        <dbReference type="UniProtKB" id="Q97YD4"/>
    </source>
</evidence>
<evidence type="ECO:0000269" key="3">
    <source>
    </source>
</evidence>
<evidence type="ECO:0000305" key="4"/>
<organism>
    <name type="scientific">Thermoproteus tenax (strain ATCC 35583 / DSM 2078 / JCM 9277 / NBRC 100435 / Kra 1)</name>
    <dbReference type="NCBI Taxonomy" id="768679"/>
    <lineage>
        <taxon>Archaea</taxon>
        <taxon>Thermoproteota</taxon>
        <taxon>Thermoprotei</taxon>
        <taxon>Thermoproteales</taxon>
        <taxon>Thermoproteaceae</taxon>
        <taxon>Thermoproteus</taxon>
    </lineage>
</organism>
<dbReference type="EMBL" id="FN869859">
    <property type="protein sequence ID" value="CCC81883.1"/>
    <property type="molecule type" value="Genomic_DNA"/>
</dbReference>
<dbReference type="RefSeq" id="WP_014127138.1">
    <property type="nucleotide sequence ID" value="NC_016070.1"/>
</dbReference>
<dbReference type="STRING" id="768679.TTX_1248"/>
<dbReference type="PaxDb" id="768679-TTX_1248"/>
<dbReference type="GeneID" id="11262128"/>
<dbReference type="KEGG" id="ttn:TTX_1248"/>
<dbReference type="PATRIC" id="fig|768679.9.peg.1261"/>
<dbReference type="eggNOG" id="arCOG04195">
    <property type="taxonomic scope" value="Archaea"/>
</dbReference>
<dbReference type="HOGENOM" id="CLU_905009_0_0_2"/>
<dbReference type="OrthoDB" id="19284at2157"/>
<dbReference type="Proteomes" id="UP000002654">
    <property type="component" value="Chromosome"/>
</dbReference>
<dbReference type="GO" id="GO:0051539">
    <property type="term" value="F:4 iron, 4 sulfur cluster binding"/>
    <property type="evidence" value="ECO:0007669"/>
    <property type="project" value="UniProtKB-KW"/>
</dbReference>
<dbReference type="GO" id="GO:0046872">
    <property type="term" value="F:metal ion binding"/>
    <property type="evidence" value="ECO:0007669"/>
    <property type="project" value="UniProtKB-KW"/>
</dbReference>
<dbReference type="GO" id="GO:0051607">
    <property type="term" value="P:defense response to virus"/>
    <property type="evidence" value="ECO:0007669"/>
    <property type="project" value="UniProtKB-KW"/>
</dbReference>
<dbReference type="InterPro" id="IPR009260">
    <property type="entry name" value="CRISPR-ass_Csa1"/>
</dbReference>
<dbReference type="NCBIfam" id="TIGR01896">
    <property type="entry name" value="cas_AF1879"/>
    <property type="match status" value="1"/>
</dbReference>
<dbReference type="Pfam" id="PF06023">
    <property type="entry name" value="Csa1"/>
    <property type="match status" value="1"/>
</dbReference>
<dbReference type="PIRSF" id="PIRSF009226">
    <property type="entry name" value="UCP009226"/>
    <property type="match status" value="1"/>
</dbReference>
<keyword id="KW-0004">4Fe-4S</keyword>
<keyword id="KW-0051">Antiviral defense</keyword>
<keyword id="KW-0408">Iron</keyword>
<keyword id="KW-0411">Iron-sulfur</keyword>
<keyword id="KW-0464">Manganese</keyword>
<keyword id="KW-0479">Metal-binding</keyword>
<keyword id="KW-1185">Reference proteome</keyword>
<name>CSA1_THETK</name>
<sequence>MLTLLEIARLLRRAKVTQGPAEVSPELRGWAYDRQPVKPPAYLGLALSDFAYGYCPTGRSLYLKYVLGERPQPTKPLAEGQALHAVLFKALEDFRRYVYSGAPMSPPGEGMPEDLRAKAEALYRYIAVRLTGEYQYVLASRLARSRDAAAFYAAPIAAQIAVDGAPLGLSYVVADGVALGAVVEFKFGPSQNVDVALAGYAMAIEAEYGVPIDYGIHVQIAVDGQVEYRASAYVLGDAPRAKFLEARDEAIDVVASARDPGPAPQCPKTCPYYSVCRS</sequence>
<feature type="chain" id="PRO_0000422232" description="CRISPR-associated exonuclease Csa1">
    <location>
        <begin position="1"/>
        <end position="278"/>
    </location>
</feature>
<feature type="binding site" evidence="1">
    <location>
        <position position="55"/>
    </location>
    <ligand>
        <name>[4Fe-4S] cluster</name>
        <dbReference type="ChEBI" id="CHEBI:49883"/>
    </ligand>
</feature>
<feature type="binding site" evidence="1">
    <location>
        <position position="266"/>
    </location>
    <ligand>
        <name>[4Fe-4S] cluster</name>
        <dbReference type="ChEBI" id="CHEBI:49883"/>
    </ligand>
</feature>
<feature type="binding site" evidence="1">
    <location>
        <position position="270"/>
    </location>
    <ligand>
        <name>[4Fe-4S] cluster</name>
        <dbReference type="ChEBI" id="CHEBI:49883"/>
    </ligand>
</feature>
<feature type="binding site" evidence="1">
    <location>
        <position position="276"/>
    </location>
    <ligand>
        <name>[4Fe-4S] cluster</name>
        <dbReference type="ChEBI" id="CHEBI:49883"/>
    </ligand>
</feature>
<gene>
    <name type="primary">csa1</name>
    <name type="ordered locus">TTX_1248</name>
</gene>
<reference key="1">
    <citation type="journal article" date="2011" name="PLoS ONE">
        <title>The complete genome sequence of Thermoproteus tenax: a physiologically versatile member of the Crenarchaeota.</title>
        <authorList>
            <person name="Siebers B."/>
            <person name="Zaparty M."/>
            <person name="Raddatz G."/>
            <person name="Tjaden B."/>
            <person name="Albers S.V."/>
            <person name="Bell S.D."/>
            <person name="Blombach F."/>
            <person name="Kletzin A."/>
            <person name="Kyrpides N."/>
            <person name="Lanz C."/>
            <person name="Plagens A."/>
            <person name="Rampp M."/>
            <person name="Rosinus A."/>
            <person name="von Jan M."/>
            <person name="Makarova K.S."/>
            <person name="Klenk H.P."/>
            <person name="Schuster S.C."/>
            <person name="Hensel R."/>
        </authorList>
    </citation>
    <scope>NUCLEOTIDE SEQUENCE [LARGE SCALE GENOMIC DNA]</scope>
    <source>
        <strain>ATCC 35583 / DSM 2078 / JCM 9277 / NBRC 100435 / Kra 1</strain>
    </source>
</reference>
<reference key="2">
    <citation type="journal article" date="2012" name="J. Bacteriol.">
        <title>Characterization of the CRISPR/Cas subtype I-A system of the hyperthermophilic crenarchaeon Thermoproteus tenax.</title>
        <authorList>
            <person name="Plagens A."/>
            <person name="Tjaden B."/>
            <person name="Hagemann A."/>
            <person name="Randau L."/>
            <person name="Hensel R."/>
        </authorList>
    </citation>
    <scope>SUBUNIT</scope>
    <scope>INDUCTION</scope>
    <scope>OPERON STRUCTURE</scope>
    <source>
        <strain>ATCC 35583 / DSM 2078 / JCM 9277 / NBRC 100435 / Kra 1</strain>
    </source>
</reference>
<protein>
    <recommendedName>
        <fullName>CRISPR-associated exonuclease Csa1</fullName>
    </recommendedName>
</protein>
<proteinExistence type="evidence at protein level"/>